<accession>Q296V2</accession>
<reference key="1">
    <citation type="journal article" date="2005" name="Genome Res.">
        <title>Comparative genome sequencing of Drosophila pseudoobscura: chromosomal, gene, and cis-element evolution.</title>
        <authorList>
            <person name="Richards S."/>
            <person name="Liu Y."/>
            <person name="Bettencourt B.R."/>
            <person name="Hradecky P."/>
            <person name="Letovsky S."/>
            <person name="Nielsen R."/>
            <person name="Thornton K."/>
            <person name="Hubisz M.J."/>
            <person name="Chen R."/>
            <person name="Meisel R.P."/>
            <person name="Couronne O."/>
            <person name="Hua S."/>
            <person name="Smith M.A."/>
            <person name="Zhang P."/>
            <person name="Liu J."/>
            <person name="Bussemaker H.J."/>
            <person name="van Batenburg M.F."/>
            <person name="Howells S.L."/>
            <person name="Scherer S.E."/>
            <person name="Sodergren E."/>
            <person name="Matthews B.B."/>
            <person name="Crosby M.A."/>
            <person name="Schroeder A.J."/>
            <person name="Ortiz-Barrientos D."/>
            <person name="Rives C.M."/>
            <person name="Metzker M.L."/>
            <person name="Muzny D.M."/>
            <person name="Scott G."/>
            <person name="Steffen D."/>
            <person name="Wheeler D.A."/>
            <person name="Worley K.C."/>
            <person name="Havlak P."/>
            <person name="Durbin K.J."/>
            <person name="Egan A."/>
            <person name="Gill R."/>
            <person name="Hume J."/>
            <person name="Morgan M.B."/>
            <person name="Miner G."/>
            <person name="Hamilton C."/>
            <person name="Huang Y."/>
            <person name="Waldron L."/>
            <person name="Verduzco D."/>
            <person name="Clerc-Blankenburg K.P."/>
            <person name="Dubchak I."/>
            <person name="Noor M.A.F."/>
            <person name="Anderson W."/>
            <person name="White K.P."/>
            <person name="Clark A.G."/>
            <person name="Schaeffer S.W."/>
            <person name="Gelbart W.M."/>
            <person name="Weinstock G.M."/>
            <person name="Gibbs R.A."/>
        </authorList>
    </citation>
    <scope>NUCLEOTIDE SEQUENCE [LARGE SCALE GENOMIC DNA]</scope>
    <source>
        <strain>MV2-25 / Tucson 14011-0121.94</strain>
    </source>
</reference>
<dbReference type="EC" id="2.3.2.-"/>
<dbReference type="EMBL" id="CM000070">
    <property type="protein sequence ID" value="EAL28355.1"/>
    <property type="molecule type" value="Genomic_DNA"/>
</dbReference>
<dbReference type="RefSeq" id="XP_001359210.1">
    <property type="nucleotide sequence ID" value="XM_001359173.4"/>
</dbReference>
<dbReference type="SMR" id="Q296V2"/>
<dbReference type="FunCoup" id="Q296V2">
    <property type="interactions" value="2593"/>
</dbReference>
<dbReference type="STRING" id="46245.Q296V2"/>
<dbReference type="EnsemblMetazoa" id="FBtr0285850">
    <property type="protein sequence ID" value="FBpp0284288"/>
    <property type="gene ID" value="FBgn0070778"/>
</dbReference>
<dbReference type="KEGG" id="dpo:4802251"/>
<dbReference type="CTD" id="23376"/>
<dbReference type="eggNOG" id="KOG2235">
    <property type="taxonomic scope" value="Eukaryota"/>
</dbReference>
<dbReference type="HOGENOM" id="CLU_012417_1_1_1"/>
<dbReference type="InParanoid" id="Q296V2"/>
<dbReference type="OMA" id="CILHASG"/>
<dbReference type="PhylomeDB" id="Q296V2"/>
<dbReference type="Proteomes" id="UP000001819">
    <property type="component" value="Chromosome 2"/>
</dbReference>
<dbReference type="Bgee" id="FBgn0070778">
    <property type="expression patterns" value="Expressed in female reproductive system and 3 other cell types or tissues"/>
</dbReference>
<dbReference type="GO" id="GO:0005789">
    <property type="term" value="C:endoplasmic reticulum membrane"/>
    <property type="evidence" value="ECO:0007669"/>
    <property type="project" value="TreeGrafter"/>
</dbReference>
<dbReference type="GO" id="GO:0061666">
    <property type="term" value="F:UFM1 ligase activity"/>
    <property type="evidence" value="ECO:0007669"/>
    <property type="project" value="InterPro"/>
</dbReference>
<dbReference type="GO" id="GO:1990592">
    <property type="term" value="P:protein K69-linked ufmylation"/>
    <property type="evidence" value="ECO:0007669"/>
    <property type="project" value="TreeGrafter"/>
</dbReference>
<dbReference type="GO" id="GO:0032434">
    <property type="term" value="P:regulation of proteasomal ubiquitin-dependent protein catabolic process"/>
    <property type="evidence" value="ECO:0007669"/>
    <property type="project" value="TreeGrafter"/>
</dbReference>
<dbReference type="GO" id="GO:0034976">
    <property type="term" value="P:response to endoplasmic reticulum stress"/>
    <property type="evidence" value="ECO:0007669"/>
    <property type="project" value="TreeGrafter"/>
</dbReference>
<dbReference type="InterPro" id="IPR018611">
    <property type="entry name" value="Ufl1"/>
</dbReference>
<dbReference type="InterPro" id="IPR056761">
    <property type="entry name" value="Ufl1-like_C"/>
</dbReference>
<dbReference type="InterPro" id="IPR056580">
    <property type="entry name" value="Ufl1_dom"/>
</dbReference>
<dbReference type="InterPro" id="IPR056579">
    <property type="entry name" value="Ufl1_N"/>
</dbReference>
<dbReference type="PANTHER" id="PTHR31057">
    <property type="entry name" value="E3 UFM1-PROTEIN LIGASE 1"/>
    <property type="match status" value="1"/>
</dbReference>
<dbReference type="PANTHER" id="PTHR31057:SF0">
    <property type="entry name" value="E3 UFM1-PROTEIN LIGASE 1"/>
    <property type="match status" value="1"/>
</dbReference>
<dbReference type="Pfam" id="PF09743">
    <property type="entry name" value="E3_UFM1_ligase"/>
    <property type="match status" value="1"/>
</dbReference>
<dbReference type="Pfam" id="PF23659">
    <property type="entry name" value="UFL1"/>
    <property type="match status" value="1"/>
</dbReference>
<dbReference type="Pfam" id="PF25041">
    <property type="entry name" value="UFL1_C"/>
    <property type="match status" value="1"/>
</dbReference>
<keyword id="KW-1185">Reference proteome</keyword>
<keyword id="KW-0808">Transferase</keyword>
<keyword id="KW-0833">Ubl conjugation pathway</keyword>
<name>UFL1_DROPS</name>
<feature type="chain" id="PRO_0000391885" description="E3 UFM1-protein ligase 1 homolog">
    <location>
        <begin position="1"/>
        <end position="785"/>
    </location>
</feature>
<feature type="region of interest" description="Disordered" evidence="2">
    <location>
        <begin position="405"/>
        <end position="483"/>
    </location>
</feature>
<evidence type="ECO:0000250" key="1">
    <source>
        <dbReference type="UniProtKB" id="O94874"/>
    </source>
</evidence>
<evidence type="ECO:0000256" key="2">
    <source>
        <dbReference type="SAM" id="MobiDB-lite"/>
    </source>
</evidence>
<evidence type="ECO:0000305" key="3"/>
<sequence length="785" mass="87553">MGSDWDEIKRLAADFQKAQLTSTLQKLSERNCVEIVTLLLEKQLLEVVFTNNGKEYITPDHLEREIQDELYANGGRANLVEVSRTLNVDLSRIVALAERIAAENPLVHLVLGQLIDEDYISHIAQEINEKLALRGEISISDLASQFDLPSEFLQQDVVEKHLGKIIKGRQDATNPRVFFTQAYIQRCKAKIRGALAAITRPTNVAVILQQINVQEKIFHSLLDEISPAGQVTSKLANAQYVPHIYAKTQADWVNSFYKQNSFLEYDAINKLGISDAKSYIRKQFPNEEFLFLKRVALGARLVELTVVTALNECSATKQYLDLTTILPSNLSEEDIEEVFSAIMAQKHSNPSNFVYLDSIVFSQPYLTELVQPCHALAEAQAKAAIDSGVYQQFVVEKTLAQKGNASFQDQDDDGKLDKRDERRKKASSGKAGGGAQGRETKTKSTKKHQRRSAAAQNDSDDEDDVQHQGSRGAGGGGGNKKTVKPLDLVKTADIEKLINASLQEEGLEHLAPSIAALYLNQLNQAALAKAQELYEATPQTNRRQTHAAIQDRINTLLIDIRLYEKGLKLFSHDTQTQLVKYLLKSLGNDICNELSLYVASECNLTVKNTSLNVDQRIKLAQECDAEYRSALLEQNKALNKSIDDFELATESVLKACSMIIKKVDKKKDRLLIADHKNKLQQQLLDCQEPALLLHLAALILFTTISGCILHASGKFVSAILQHIRGSLSDQQNDMLLRYHDLVLQVLQTAPESDDSKIAHEQLQIMQSKVVELAQNYTRASVSKAD</sequence>
<organism>
    <name type="scientific">Drosophila pseudoobscura pseudoobscura</name>
    <name type="common">Fruit fly</name>
    <dbReference type="NCBI Taxonomy" id="46245"/>
    <lineage>
        <taxon>Eukaryota</taxon>
        <taxon>Metazoa</taxon>
        <taxon>Ecdysozoa</taxon>
        <taxon>Arthropoda</taxon>
        <taxon>Hexapoda</taxon>
        <taxon>Insecta</taxon>
        <taxon>Pterygota</taxon>
        <taxon>Neoptera</taxon>
        <taxon>Endopterygota</taxon>
        <taxon>Diptera</taxon>
        <taxon>Brachycera</taxon>
        <taxon>Muscomorpha</taxon>
        <taxon>Ephydroidea</taxon>
        <taxon>Drosophilidae</taxon>
        <taxon>Drosophila</taxon>
        <taxon>Sophophora</taxon>
    </lineage>
</organism>
<gene>
    <name type="ORF">GA10722</name>
</gene>
<comment type="function">
    <text evidence="1">E3 UFM1-protein ligase that mediates ufmylation of target proteins.</text>
</comment>
<comment type="similarity">
    <text evidence="3">Belongs to the UFL1 family.</text>
</comment>
<protein>
    <recommendedName>
        <fullName>E3 UFM1-protein ligase 1 homolog</fullName>
        <ecNumber>2.3.2.-</ecNumber>
    </recommendedName>
    <alternativeName>
        <fullName evidence="3">E3 UFM1-protein transferase 1 homolog</fullName>
    </alternativeName>
</protein>
<proteinExistence type="inferred from homology"/>